<sequence length="1408" mass="159437">MHDVPMETVLAVNPATMIVKECINLCSAMNKQSRDKSQTSVAALLGGGSDIFLSQSDSFVDSFHNLPTSSYHDPLISGLVQLRLKINDLKGLDSLNALELLKPFLEIVSASSVSGYTTSLALDSLQKVFTLKIINKTFNDIQIAVRETVVALTHCRFEASKQISDDSVLLKVVTLLRDIITSSFGDYLSDTIIYDVLQTTLSLACNTQRSEVLRKTAEVTIAGITVKLFTKLKLLDPPTKTEKYINDESYTDNNLKDDIIGTTTSDNDLSSTDDDSAVADDNKNEKPVQQVIREQENDEETAEKAENVEPNYGITVIKDYLGLLLSLVMPENRMKHTTSAMKLSLQLINAAIEISGDKFPLYPRLFSLISDPIFKSVLFIIQSSTQYSLLQATLQLFTSLVVILGDYLPMQIELTLRRIFEILEDTTISGDVSKQKPPAIRELIIEQLSILWIHSPAFFLQLFVNFDCNLDRSDLSIDFIKELTKFSLPAAAVNTSNNIPPICLEGVLSLIENIYNDLQRFDRAEFVKNQKEIDILKQRDRKTEFILCVETFNEKAKKGIQMLIEKGFIDSDSNRDIASFLFLNNGRLNKKTIGLLLCDPKKTSLLKEFIDLFDFKGLRVDEAIRILLTKFRLPGESQQIERIVEAFSSKYSADQSNDKVELEDKKAGKNGSESMTEDDIIHVQPDADSVFVLSYSIIMLNTDSHNPQVKDHMTFDDYSNNLRGCYNGKDFPRWYLHKIYTSIKVKEIVMPEEHHGNERWFEDAWNNLISSTSVMTEMQRDFTNPISKLAQIDILQYEKAIFSNVRDIILKTLFKIFTVASSDQISLRILDAISKCTFINYYFSFDQSYNDTVLHLGEMTTLAQSSAKAVELDVDSIPLVEIFVEDTGSKISVSNQSIRLGQNFKAQLCTVLYFQIIKEISDPSIVSTRLWNQIVQLILKLFENLLMEPNLPFFTNFHSLLKLPELPLPDPDISIRKAKMSRSLLSTFASYLKGDEEPSEEDIDFSIKAFECVKASHPLSSVFENNQLVSPKMIETLLSSLVIEKTSENSPYFEQELLFLLEISIILISEASYGQEFGALIADHMINISNLDGLSKEAIARLASYKMFLVSRFDNPRDILSDLIEHDFLVKNEIFNTKYYESEWGKQVINDLFTHLNDVKYNERALKNVKFWNFLRILISAKDRQFAVYTFLEKYIQNGDIFVDDGNFMNILSLLDEMSCAGAVGTKWEQNYENSVEDGCEAPESNPYRSIIDLSSRSINITADLLSTVGRSNSALNKNEIIAAIQGLAHQCLNPCDELGMQALQALENILLSRASQLRTEKVAVDNLLETGLLPIFELDEIQDVKMKRITSILSVLSKIFLGQLVEGVTSNETFLRVLNVFNKYVDDPTVERQLQELIISKREIEKE</sequence>
<dbReference type="EMBL" id="Z49531">
    <property type="protein sequence ID" value="CAA89558.1"/>
    <property type="molecule type" value="Genomic_DNA"/>
</dbReference>
<dbReference type="EMBL" id="X87297">
    <property type="protein sequence ID" value="CAA60724.1"/>
    <property type="molecule type" value="Genomic_DNA"/>
</dbReference>
<dbReference type="EMBL" id="BK006943">
    <property type="protein sequence ID" value="DAA08820.1"/>
    <property type="molecule type" value="Genomic_DNA"/>
</dbReference>
<dbReference type="PIR" id="S57049">
    <property type="entry name" value="S57049"/>
</dbReference>
<dbReference type="RefSeq" id="NP_012565.1">
    <property type="nucleotide sequence ID" value="NM_001181689.1"/>
</dbReference>
<dbReference type="PDB" id="1RE0">
    <property type="method" value="X-ray"/>
    <property type="resolution" value="2.40 A"/>
    <property type="chains" value="B=540-754"/>
</dbReference>
<dbReference type="PDBsum" id="1RE0"/>
<dbReference type="SMR" id="P47102"/>
<dbReference type="BioGRID" id="33784">
    <property type="interactions" value="105"/>
</dbReference>
<dbReference type="DIP" id="DIP-5697N"/>
<dbReference type="FunCoup" id="P47102">
    <property type="interactions" value="738"/>
</dbReference>
<dbReference type="IntAct" id="P47102">
    <property type="interactions" value="7"/>
</dbReference>
<dbReference type="MINT" id="P47102"/>
<dbReference type="STRING" id="4932.YJR031C"/>
<dbReference type="CarbonylDB" id="P47102"/>
<dbReference type="iPTMnet" id="P47102"/>
<dbReference type="PaxDb" id="4932-YJR031C"/>
<dbReference type="PeptideAtlas" id="P47102"/>
<dbReference type="EnsemblFungi" id="YJR031C_mRNA">
    <property type="protein sequence ID" value="YJR031C"/>
    <property type="gene ID" value="YJR031C"/>
</dbReference>
<dbReference type="GeneID" id="853488"/>
<dbReference type="KEGG" id="sce:YJR031C"/>
<dbReference type="AGR" id="SGD:S000003792"/>
<dbReference type="SGD" id="S000003792">
    <property type="gene designation" value="GEA1"/>
</dbReference>
<dbReference type="VEuPathDB" id="FungiDB:YJR031C"/>
<dbReference type="eggNOG" id="KOG0928">
    <property type="taxonomic scope" value="Eukaryota"/>
</dbReference>
<dbReference type="GeneTree" id="ENSGT00940000176690"/>
<dbReference type="HOGENOM" id="CLU_001204_0_1_1"/>
<dbReference type="InParanoid" id="P47102"/>
<dbReference type="OrthoDB" id="10258608at2759"/>
<dbReference type="BioCyc" id="YEAST:G3O-31669-MONOMER"/>
<dbReference type="BioGRID-ORCS" id="853488">
    <property type="hits" value="0 hits in 10 CRISPR screens"/>
</dbReference>
<dbReference type="EvolutionaryTrace" id="P47102"/>
<dbReference type="PRO" id="PR:P47102"/>
<dbReference type="Proteomes" id="UP000002311">
    <property type="component" value="Chromosome X"/>
</dbReference>
<dbReference type="RNAct" id="P47102">
    <property type="molecule type" value="protein"/>
</dbReference>
<dbReference type="GO" id="GO:0005933">
    <property type="term" value="C:cellular bud"/>
    <property type="evidence" value="ECO:0007005"/>
    <property type="project" value="SGD"/>
</dbReference>
<dbReference type="GO" id="GO:0005829">
    <property type="term" value="C:cytosol"/>
    <property type="evidence" value="ECO:0007669"/>
    <property type="project" value="UniProtKB-SubCell"/>
</dbReference>
<dbReference type="GO" id="GO:0005783">
    <property type="term" value="C:endoplasmic reticulum"/>
    <property type="evidence" value="ECO:0007669"/>
    <property type="project" value="UniProtKB-SubCell"/>
</dbReference>
<dbReference type="GO" id="GO:0000137">
    <property type="term" value="C:Golgi cis cisterna"/>
    <property type="evidence" value="ECO:0000314"/>
    <property type="project" value="SGD"/>
</dbReference>
<dbReference type="GO" id="GO:0016020">
    <property type="term" value="C:membrane"/>
    <property type="evidence" value="ECO:0007669"/>
    <property type="project" value="UniProtKB-SubCell"/>
</dbReference>
<dbReference type="GO" id="GO:0005739">
    <property type="term" value="C:mitochondrion"/>
    <property type="evidence" value="ECO:0007669"/>
    <property type="project" value="UniProtKB-SubCell"/>
</dbReference>
<dbReference type="GO" id="GO:0005085">
    <property type="term" value="F:guanyl-nucleotide exchange factor activity"/>
    <property type="evidence" value="ECO:0000314"/>
    <property type="project" value="SGD"/>
</dbReference>
<dbReference type="GO" id="GO:0030036">
    <property type="term" value="P:actin cytoskeleton organization"/>
    <property type="evidence" value="ECO:0000316"/>
    <property type="project" value="SGD"/>
</dbReference>
<dbReference type="GO" id="GO:0006888">
    <property type="term" value="P:endoplasmic reticulum to Golgi vesicle-mediated transport"/>
    <property type="evidence" value="ECO:0000315"/>
    <property type="project" value="SGD"/>
</dbReference>
<dbReference type="GO" id="GO:0006891">
    <property type="term" value="P:intra-Golgi vesicle-mediated transport"/>
    <property type="evidence" value="ECO:0000315"/>
    <property type="project" value="SGD"/>
</dbReference>
<dbReference type="GO" id="GO:0016236">
    <property type="term" value="P:macroautophagy"/>
    <property type="evidence" value="ECO:0000315"/>
    <property type="project" value="SGD"/>
</dbReference>
<dbReference type="GO" id="GO:0032012">
    <property type="term" value="P:regulation of ARF protein signal transduction"/>
    <property type="evidence" value="ECO:0007669"/>
    <property type="project" value="InterPro"/>
</dbReference>
<dbReference type="GO" id="GO:0006890">
    <property type="term" value="P:retrograde vesicle-mediated transport, Golgi to endoplasmic reticulum"/>
    <property type="evidence" value="ECO:0000316"/>
    <property type="project" value="SGD"/>
</dbReference>
<dbReference type="CDD" id="cd00171">
    <property type="entry name" value="Sec7"/>
    <property type="match status" value="1"/>
</dbReference>
<dbReference type="FunFam" id="1.10.1000.11:FF:000010">
    <property type="entry name" value="ARF guanine-nucleotide exchange factor GNOM-like"/>
    <property type="match status" value="1"/>
</dbReference>
<dbReference type="FunFam" id="1.10.220.20:FF:000007">
    <property type="entry name" value="GDP/GTP exchange factor"/>
    <property type="match status" value="1"/>
</dbReference>
<dbReference type="Gene3D" id="1.10.220.20">
    <property type="match status" value="1"/>
</dbReference>
<dbReference type="Gene3D" id="1.10.1000.11">
    <property type="entry name" value="Arf Nucleotide-binding Site Opener,domain 2"/>
    <property type="match status" value="1"/>
</dbReference>
<dbReference type="InterPro" id="IPR032691">
    <property type="entry name" value="Mon2/Sec7/BIG1-like_HUS"/>
</dbReference>
<dbReference type="InterPro" id="IPR023394">
    <property type="entry name" value="Sec7_C_sf"/>
</dbReference>
<dbReference type="InterPro" id="IPR000904">
    <property type="entry name" value="Sec7_dom"/>
</dbReference>
<dbReference type="InterPro" id="IPR035999">
    <property type="entry name" value="Sec7_dom_sf"/>
</dbReference>
<dbReference type="PANTHER" id="PTHR10663:SF388">
    <property type="entry name" value="GOLGI-SPECIFIC BREFELDIN A-RESISTANCE GUANINE NUCLEOTIDE EXCHANGE FACTOR 1"/>
    <property type="match status" value="1"/>
</dbReference>
<dbReference type="PANTHER" id="PTHR10663">
    <property type="entry name" value="GUANYL-NUCLEOTIDE EXCHANGE FACTOR"/>
    <property type="match status" value="1"/>
</dbReference>
<dbReference type="Pfam" id="PF01369">
    <property type="entry name" value="Sec7"/>
    <property type="match status" value="1"/>
</dbReference>
<dbReference type="Pfam" id="PF12783">
    <property type="entry name" value="Sec7-like_HUS"/>
    <property type="match status" value="1"/>
</dbReference>
<dbReference type="SMART" id="SM00222">
    <property type="entry name" value="Sec7"/>
    <property type="match status" value="1"/>
</dbReference>
<dbReference type="SUPFAM" id="SSF48425">
    <property type="entry name" value="Sec7 domain"/>
    <property type="match status" value="1"/>
</dbReference>
<dbReference type="PROSITE" id="PS50190">
    <property type="entry name" value="SEC7"/>
    <property type="match status" value="1"/>
</dbReference>
<feature type="chain" id="PRO_0000120212" description="ARF guanine-nucleotide exchange factor 1">
    <location>
        <begin position="1"/>
        <end position="1408"/>
    </location>
</feature>
<feature type="domain" description="SEC7" evidence="2">
    <location>
        <begin position="552"/>
        <end position="706"/>
    </location>
</feature>
<feature type="region of interest" description="Disordered" evidence="3">
    <location>
        <begin position="262"/>
        <end position="287"/>
    </location>
</feature>
<feature type="modified residue" description="Phosphoserine" evidence="1">
    <location>
        <position position="49"/>
    </location>
</feature>
<feature type="mutagenesis site" description="Abolishes interaction with GMH1." evidence="4">
    <original>L</original>
    <variation>S</variation>
    <location>
        <position position="862"/>
    </location>
</feature>
<feature type="helix" evidence="9">
    <location>
        <begin position="540"/>
        <end position="554"/>
    </location>
</feature>
<feature type="helix" evidence="9">
    <location>
        <begin position="556"/>
        <end position="565"/>
    </location>
</feature>
<feature type="strand" evidence="9">
    <location>
        <begin position="568"/>
        <end position="570"/>
    </location>
</feature>
<feature type="helix" evidence="9">
    <location>
        <begin position="574"/>
        <end position="584"/>
    </location>
</feature>
<feature type="helix" evidence="9">
    <location>
        <begin position="585"/>
        <end position="587"/>
    </location>
</feature>
<feature type="helix" evidence="9">
    <location>
        <begin position="590"/>
        <end position="597"/>
    </location>
</feature>
<feature type="helix" evidence="9">
    <location>
        <begin position="600"/>
        <end position="602"/>
    </location>
</feature>
<feature type="helix" evidence="9">
    <location>
        <begin position="603"/>
        <end position="610"/>
    </location>
</feature>
<feature type="helix" evidence="9">
    <location>
        <begin position="620"/>
        <end position="627"/>
    </location>
</feature>
<feature type="helix" evidence="9">
    <location>
        <begin position="637"/>
        <end position="653"/>
    </location>
</feature>
<feature type="helix" evidence="9">
    <location>
        <begin position="687"/>
        <end position="705"/>
    </location>
</feature>
<feature type="helix" evidence="9">
    <location>
        <begin position="715"/>
        <end position="721"/>
    </location>
</feature>
<feature type="turn" evidence="9">
    <location>
        <begin position="722"/>
        <end position="725"/>
    </location>
</feature>
<feature type="helix" evidence="9">
    <location>
        <begin position="733"/>
        <end position="745"/>
    </location>
</feature>
<feature type="helix" evidence="9">
    <location>
        <begin position="751"/>
        <end position="753"/>
    </location>
</feature>
<reference key="1">
    <citation type="journal article" date="1995" name="Yeast">
        <title>The sequence of 24.3 kb from chromosome X reveals five complete open reading frames, all of which correspond to new genes, and a tandem insertion of a Ty1 transposon.</title>
        <authorList>
            <person name="Zagulski M."/>
            <person name="Babinska B."/>
            <person name="Gromadka R."/>
            <person name="Migdalski A."/>
            <person name="Rytka J."/>
            <person name="Sulicka J."/>
            <person name="Herbert C.J."/>
        </authorList>
    </citation>
    <scope>NUCLEOTIDE SEQUENCE [GENOMIC DNA]</scope>
</reference>
<reference key="2">
    <citation type="journal article" date="1996" name="EMBO J.">
        <title>Complete nucleotide sequence of Saccharomyces cerevisiae chromosome X.</title>
        <authorList>
            <person name="Galibert F."/>
            <person name="Alexandraki D."/>
            <person name="Baur A."/>
            <person name="Boles E."/>
            <person name="Chalwatzis N."/>
            <person name="Chuat J.-C."/>
            <person name="Coster F."/>
            <person name="Cziepluch C."/>
            <person name="de Haan M."/>
            <person name="Domdey H."/>
            <person name="Durand P."/>
            <person name="Entian K.-D."/>
            <person name="Gatius M."/>
            <person name="Goffeau A."/>
            <person name="Grivell L.A."/>
            <person name="Hennemann A."/>
            <person name="Herbert C.J."/>
            <person name="Heumann K."/>
            <person name="Hilger F."/>
            <person name="Hollenberg C.P."/>
            <person name="Huang M.-E."/>
            <person name="Jacq C."/>
            <person name="Jauniaux J.-C."/>
            <person name="Katsoulou C."/>
            <person name="Kirchrath L."/>
            <person name="Kleine K."/>
            <person name="Kordes E."/>
            <person name="Koetter P."/>
            <person name="Liebl S."/>
            <person name="Louis E.J."/>
            <person name="Manus V."/>
            <person name="Mewes H.-W."/>
            <person name="Miosga T."/>
            <person name="Obermaier B."/>
            <person name="Perea J."/>
            <person name="Pohl T.M."/>
            <person name="Portetelle D."/>
            <person name="Pujol A."/>
            <person name="Purnelle B."/>
            <person name="Ramezani Rad M."/>
            <person name="Rasmussen S.W."/>
            <person name="Rose M."/>
            <person name="Rossau R."/>
            <person name="Schaaff-Gerstenschlaeger I."/>
            <person name="Smits P.H.M."/>
            <person name="Scarcez T."/>
            <person name="Soriano N."/>
            <person name="To Van D."/>
            <person name="Tzermia M."/>
            <person name="Van Broekhoven A."/>
            <person name="Vandenbol M."/>
            <person name="Wedler H."/>
            <person name="von Wettstein D."/>
            <person name="Wambutt R."/>
            <person name="Zagulski M."/>
            <person name="Zollner A."/>
            <person name="Karpfinger-Hartl L."/>
        </authorList>
    </citation>
    <scope>NUCLEOTIDE SEQUENCE [LARGE SCALE GENOMIC DNA]</scope>
    <source>
        <strain>ATCC 204508 / S288c</strain>
    </source>
</reference>
<reference key="3">
    <citation type="journal article" date="2014" name="G3 (Bethesda)">
        <title>The reference genome sequence of Saccharomyces cerevisiae: Then and now.</title>
        <authorList>
            <person name="Engel S.R."/>
            <person name="Dietrich F.S."/>
            <person name="Fisk D.G."/>
            <person name="Binkley G."/>
            <person name="Balakrishnan R."/>
            <person name="Costanzo M.C."/>
            <person name="Dwight S.S."/>
            <person name="Hitz B.C."/>
            <person name="Karra K."/>
            <person name="Nash R.S."/>
            <person name="Weng S."/>
            <person name="Wong E.D."/>
            <person name="Lloyd P."/>
            <person name="Skrzypek M.S."/>
            <person name="Miyasato S.R."/>
            <person name="Simison M."/>
            <person name="Cherry J.M."/>
        </authorList>
    </citation>
    <scope>GENOME REANNOTATION</scope>
    <source>
        <strain>ATCC 204508 / S288c</strain>
    </source>
</reference>
<reference key="4">
    <citation type="journal article" date="1996" name="Nature">
        <title>Nucleotide exchange on ARF mediated by yeast Gea1 protein.</title>
        <authorList>
            <person name="Peyroche A."/>
            <person name="Paris S."/>
            <person name="Jackson C.L."/>
        </authorList>
    </citation>
    <scope>CHARACTERIZATION</scope>
</reference>
<reference key="5">
    <citation type="journal article" date="2003" name="Nature">
        <title>Global analysis of protein expression in yeast.</title>
        <authorList>
            <person name="Ghaemmaghami S."/>
            <person name="Huh W.-K."/>
            <person name="Bower K."/>
            <person name="Howson R.W."/>
            <person name="Belle A."/>
            <person name="Dephoure N."/>
            <person name="O'Shea E.K."/>
            <person name="Weissman J.S."/>
        </authorList>
    </citation>
    <scope>LEVEL OF PROTEIN EXPRESSION [LARGE SCALE ANALYSIS]</scope>
</reference>
<reference key="6">
    <citation type="journal article" date="2003" name="Mol. Biol. Cell">
        <title>A novel Golgi membrane protein is a partner of the ARF exchange factors Gea1p and Gea2p.</title>
        <authorList>
            <person name="Chantalat S."/>
            <person name="Courbeyrette R."/>
            <person name="Senic-Matuglia F."/>
            <person name="Jackson C.L."/>
            <person name="Goud B."/>
            <person name="Peyroche A."/>
        </authorList>
    </citation>
    <scope>INTERACTION WITH GMH1</scope>
    <scope>MUTAGENESIS OF LEU-862</scope>
</reference>
<reference key="7">
    <citation type="journal article" date="2004" name="J. Cell Sci.">
        <title>The Arf activator Gea2p and the P-type ATPase Drs2p interact at the Golgi in Saccharomyces cerevisiae.</title>
        <authorList>
            <person name="Chantalat S."/>
            <person name="Park S.K."/>
            <person name="Hua Z."/>
            <person name="Liu K."/>
            <person name="Gobin R."/>
            <person name="Peyroche A."/>
            <person name="Rambourg A."/>
            <person name="Graham T.R."/>
            <person name="Jackson C.L."/>
        </authorList>
    </citation>
    <scope>INTERACTION WITH DRS2</scope>
</reference>
<reference key="8">
    <citation type="journal article" date="2009" name="EMBO Rep.">
        <title>A COPI coat subunit interacts directly with an early-Golgi localized Arf exchange factor.</title>
        <authorList>
            <person name="Deng Y."/>
            <person name="Golinelli-Cohen M.P."/>
            <person name="Smirnova E."/>
            <person name="Jackson C.L."/>
        </authorList>
    </citation>
    <scope>INTERACTION WITH SEC21</scope>
</reference>
<reference key="9">
    <citation type="journal article" date="2014" name="EMBO J.">
        <title>The small GTPase Arf1 modulates mitochondrial morphology and function.</title>
        <authorList>
            <person name="Ackema K.B."/>
            <person name="Hench J."/>
            <person name="Boeckler S."/>
            <person name="Wang S.C."/>
            <person name="Sauder U."/>
            <person name="Mergentaler H."/>
            <person name="Westermann B."/>
            <person name="Bard F."/>
            <person name="Frank S."/>
            <person name="Spang A."/>
        </authorList>
    </citation>
    <scope>FUNCTION</scope>
    <scope>SUBCELLULAR LOCATION</scope>
</reference>
<accession>P47102</accession>
<accession>D6VWK4</accession>
<proteinExistence type="evidence at protein level"/>
<gene>
    <name type="primary">GEA1</name>
    <name type="ordered locus">YJR031C</name>
    <name type="ORF">J1580</name>
</gene>
<organism>
    <name type="scientific">Saccharomyces cerevisiae (strain ATCC 204508 / S288c)</name>
    <name type="common">Baker's yeast</name>
    <dbReference type="NCBI Taxonomy" id="559292"/>
    <lineage>
        <taxon>Eukaryota</taxon>
        <taxon>Fungi</taxon>
        <taxon>Dikarya</taxon>
        <taxon>Ascomycota</taxon>
        <taxon>Saccharomycotina</taxon>
        <taxon>Saccharomycetes</taxon>
        <taxon>Saccharomycetales</taxon>
        <taxon>Saccharomycetaceae</taxon>
        <taxon>Saccharomyces</taxon>
    </lineage>
</organism>
<name>GEA1_YEAST</name>
<protein>
    <recommendedName>
        <fullName>ARF guanine-nucleotide exchange factor 1</fullName>
    </recommendedName>
</protein>
<keyword id="KW-0002">3D-structure</keyword>
<keyword id="KW-0963">Cytoplasm</keyword>
<keyword id="KW-0256">Endoplasmic reticulum</keyword>
<keyword id="KW-0344">Guanine-nucleotide releasing factor</keyword>
<keyword id="KW-0472">Membrane</keyword>
<keyword id="KW-0496">Mitochondrion</keyword>
<keyword id="KW-0597">Phosphoprotein</keyword>
<keyword id="KW-1185">Reference proteome</keyword>
<evidence type="ECO:0000250" key="1">
    <source>
        <dbReference type="UniProtKB" id="P39993"/>
    </source>
</evidence>
<evidence type="ECO:0000255" key="2">
    <source>
        <dbReference type="PROSITE-ProRule" id="PRU00189"/>
    </source>
</evidence>
<evidence type="ECO:0000256" key="3">
    <source>
        <dbReference type="SAM" id="MobiDB-lite"/>
    </source>
</evidence>
<evidence type="ECO:0000269" key="4">
    <source>
    </source>
</evidence>
<evidence type="ECO:0000269" key="5">
    <source>
    </source>
</evidence>
<evidence type="ECO:0000269" key="6">
    <source>
    </source>
</evidence>
<evidence type="ECO:0000269" key="7">
    <source>
    </source>
</evidence>
<evidence type="ECO:0000269" key="8">
    <source>
    </source>
</evidence>
<evidence type="ECO:0007829" key="9">
    <source>
        <dbReference type="PDB" id="1RE0"/>
    </source>
</evidence>
<comment type="function">
    <text evidence="8">Activates the ARF proteins by exchanging bound GDP for free GTP. Plays a role in maintaining mitochondrial morphology, and in the turnover of mitochondria through mitophagy (PubMed:25190516).</text>
</comment>
<comment type="subunit">
    <text evidence="4 6 7">Interacts (via N-terminal region) with SEC21 (via C-terminus) (PubMed:19039328). Interacts with GMH1 (PubMed:12808035). Interacts with DRS2 (PubMed:14734650).</text>
</comment>
<comment type="interaction">
    <interactant intactId="EBI-7539">
        <id>P47102</id>
    </interactant>
    <interactant intactId="EBI-4891">
        <id>P32074</id>
        <label>SEC21</label>
    </interactant>
    <organismsDiffer>false</organismsDiffer>
    <experiments>6</experiments>
</comment>
<comment type="subcellular location">
    <subcellularLocation>
        <location evidence="1">Cytoplasm</location>
        <location evidence="1">Cytosol</location>
    </subcellularLocation>
    <subcellularLocation>
        <location evidence="1">Membrane</location>
        <topology evidence="1">Peripheral membrane protein</topology>
    </subcellularLocation>
    <subcellularLocation>
        <location evidence="8">Endoplasmic reticulum</location>
    </subcellularLocation>
    <subcellularLocation>
        <location evidence="8">Mitochondrion</location>
    </subcellularLocation>
    <text evidence="1">Soluble and partially membrane-bound.</text>
</comment>
<comment type="domain">
    <text>The SEC7 domain is sufficient for stimulation of nucleotide exchange on myristoylated yeast ARF2.</text>
</comment>
<comment type="miscellaneous">
    <text evidence="5">Present with 2940 molecules/cell in log phase SD medium.</text>
</comment>